<organism>
    <name type="scientific">Staphylococcus aureus (strain COL)</name>
    <dbReference type="NCBI Taxonomy" id="93062"/>
    <lineage>
        <taxon>Bacteria</taxon>
        <taxon>Bacillati</taxon>
        <taxon>Bacillota</taxon>
        <taxon>Bacilli</taxon>
        <taxon>Bacillales</taxon>
        <taxon>Staphylococcaceae</taxon>
        <taxon>Staphylococcus</taxon>
    </lineage>
</organism>
<feature type="chain" id="PRO_0000170210" description="Large ribosomal subunit protein bL33A">
    <location>
        <begin position="1"/>
        <end position="49"/>
    </location>
</feature>
<evidence type="ECO:0000255" key="1">
    <source>
        <dbReference type="HAMAP-Rule" id="MF_00294"/>
    </source>
</evidence>
<keyword id="KW-0687">Ribonucleoprotein</keyword>
<keyword id="KW-0689">Ribosomal protein</keyword>
<proteinExistence type="inferred from homology"/>
<sequence length="49" mass="5873">MRVNVTLACTECGDRNYITTKNKRNNPERVEMKKFCSRENKQTLHRETK</sequence>
<comment type="similarity">
    <text evidence="1">Belongs to the bacterial ribosomal protein bL33 family.</text>
</comment>
<accession>Q5HFK9</accession>
<name>RL331_STAAC</name>
<dbReference type="EMBL" id="CP000046">
    <property type="protein sequence ID" value="AAW38224.1"/>
    <property type="molecule type" value="Genomic_DNA"/>
</dbReference>
<dbReference type="SMR" id="Q5HFK9"/>
<dbReference type="KEGG" id="sac:SACOL1608"/>
<dbReference type="HOGENOM" id="CLU_190949_0_2_9"/>
<dbReference type="Proteomes" id="UP000000530">
    <property type="component" value="Chromosome"/>
</dbReference>
<dbReference type="GO" id="GO:0005737">
    <property type="term" value="C:cytoplasm"/>
    <property type="evidence" value="ECO:0007669"/>
    <property type="project" value="UniProtKB-ARBA"/>
</dbReference>
<dbReference type="GO" id="GO:1990904">
    <property type="term" value="C:ribonucleoprotein complex"/>
    <property type="evidence" value="ECO:0007669"/>
    <property type="project" value="UniProtKB-KW"/>
</dbReference>
<dbReference type="GO" id="GO:0005840">
    <property type="term" value="C:ribosome"/>
    <property type="evidence" value="ECO:0007669"/>
    <property type="project" value="UniProtKB-KW"/>
</dbReference>
<dbReference type="GO" id="GO:0003735">
    <property type="term" value="F:structural constituent of ribosome"/>
    <property type="evidence" value="ECO:0007669"/>
    <property type="project" value="InterPro"/>
</dbReference>
<dbReference type="GO" id="GO:0006412">
    <property type="term" value="P:translation"/>
    <property type="evidence" value="ECO:0007669"/>
    <property type="project" value="UniProtKB-UniRule"/>
</dbReference>
<dbReference type="Gene3D" id="2.20.28.120">
    <property type="entry name" value="Ribosomal protein L33"/>
    <property type="match status" value="1"/>
</dbReference>
<dbReference type="HAMAP" id="MF_00294">
    <property type="entry name" value="Ribosomal_bL33"/>
    <property type="match status" value="1"/>
</dbReference>
<dbReference type="InterPro" id="IPR001705">
    <property type="entry name" value="Ribosomal_bL33"/>
</dbReference>
<dbReference type="InterPro" id="IPR018264">
    <property type="entry name" value="Ribosomal_bL33_CS"/>
</dbReference>
<dbReference type="InterPro" id="IPR038584">
    <property type="entry name" value="Ribosomal_bL33_sf"/>
</dbReference>
<dbReference type="InterPro" id="IPR011332">
    <property type="entry name" value="Ribosomal_zn-bd"/>
</dbReference>
<dbReference type="NCBIfam" id="NF001764">
    <property type="entry name" value="PRK00504.1"/>
    <property type="match status" value="1"/>
</dbReference>
<dbReference type="NCBIfam" id="NF001860">
    <property type="entry name" value="PRK00595.1"/>
    <property type="match status" value="1"/>
</dbReference>
<dbReference type="NCBIfam" id="TIGR01023">
    <property type="entry name" value="rpmG_bact"/>
    <property type="match status" value="1"/>
</dbReference>
<dbReference type="PANTHER" id="PTHR43168">
    <property type="entry name" value="50S RIBOSOMAL PROTEIN L33, CHLOROPLASTIC"/>
    <property type="match status" value="1"/>
</dbReference>
<dbReference type="PANTHER" id="PTHR43168:SF2">
    <property type="entry name" value="LARGE RIBOSOMAL SUBUNIT PROTEIN BL33C"/>
    <property type="match status" value="1"/>
</dbReference>
<dbReference type="Pfam" id="PF00471">
    <property type="entry name" value="Ribosomal_L33"/>
    <property type="match status" value="1"/>
</dbReference>
<dbReference type="SUPFAM" id="SSF57829">
    <property type="entry name" value="Zn-binding ribosomal proteins"/>
    <property type="match status" value="1"/>
</dbReference>
<dbReference type="PROSITE" id="PS00582">
    <property type="entry name" value="RIBOSOMAL_L33"/>
    <property type="match status" value="1"/>
</dbReference>
<protein>
    <recommendedName>
        <fullName evidence="1">Large ribosomal subunit protein bL33A</fullName>
    </recommendedName>
    <alternativeName>
        <fullName evidence="1">50S ribosomal protein L33 1</fullName>
    </alternativeName>
</protein>
<reference key="1">
    <citation type="journal article" date="2005" name="J. Bacteriol.">
        <title>Insights on evolution of virulence and resistance from the complete genome analysis of an early methicillin-resistant Staphylococcus aureus strain and a biofilm-producing methicillin-resistant Staphylococcus epidermidis strain.</title>
        <authorList>
            <person name="Gill S.R."/>
            <person name="Fouts D.E."/>
            <person name="Archer G.L."/>
            <person name="Mongodin E.F."/>
            <person name="DeBoy R.T."/>
            <person name="Ravel J."/>
            <person name="Paulsen I.T."/>
            <person name="Kolonay J.F."/>
            <person name="Brinkac L.M."/>
            <person name="Beanan M.J."/>
            <person name="Dodson R.J."/>
            <person name="Daugherty S.C."/>
            <person name="Madupu R."/>
            <person name="Angiuoli S.V."/>
            <person name="Durkin A.S."/>
            <person name="Haft D.H."/>
            <person name="Vamathevan J.J."/>
            <person name="Khouri H."/>
            <person name="Utterback T.R."/>
            <person name="Lee C."/>
            <person name="Dimitrov G."/>
            <person name="Jiang L."/>
            <person name="Qin H."/>
            <person name="Weidman J."/>
            <person name="Tran K."/>
            <person name="Kang K.H."/>
            <person name="Hance I.R."/>
            <person name="Nelson K.E."/>
            <person name="Fraser C.M."/>
        </authorList>
    </citation>
    <scope>NUCLEOTIDE SEQUENCE [LARGE SCALE GENOMIC DNA]</scope>
    <source>
        <strain>COL</strain>
    </source>
</reference>
<gene>
    <name evidence="1" type="primary">rpmG1</name>
    <name type="ordered locus">SACOL1608</name>
</gene>